<comment type="function">
    <text evidence="1">One of the proteins required for the normal export of preproteins out of the cell cytoplasm. It is a molecular chaperone that binds to a subset of precursor proteins, maintaining them in a translocation-competent state. It also specifically binds to its receptor SecA.</text>
</comment>
<comment type="subunit">
    <text evidence="1">Homotetramer, a dimer of dimers. One homotetramer interacts with 1 SecA dimer.</text>
</comment>
<comment type="subcellular location">
    <subcellularLocation>
        <location evidence="1">Cytoplasm</location>
    </subcellularLocation>
</comment>
<comment type="similarity">
    <text evidence="1">Belongs to the SecB family.</text>
</comment>
<protein>
    <recommendedName>
        <fullName evidence="1">Protein-export protein SecB</fullName>
    </recommendedName>
</protein>
<keyword id="KW-0143">Chaperone</keyword>
<keyword id="KW-0963">Cytoplasm</keyword>
<keyword id="KW-0653">Protein transport</keyword>
<keyword id="KW-0811">Translocation</keyword>
<keyword id="KW-0813">Transport</keyword>
<reference key="1">
    <citation type="journal article" date="2010" name="Genome Biol. Evol.">
        <title>Continuing evolution of Burkholderia mallei through genome reduction and large-scale rearrangements.</title>
        <authorList>
            <person name="Losada L."/>
            <person name="Ronning C.M."/>
            <person name="DeShazer D."/>
            <person name="Woods D."/>
            <person name="Fedorova N."/>
            <person name="Kim H.S."/>
            <person name="Shabalina S.A."/>
            <person name="Pearson T.R."/>
            <person name="Brinkac L."/>
            <person name="Tan P."/>
            <person name="Nandi T."/>
            <person name="Crabtree J."/>
            <person name="Badger J."/>
            <person name="Beckstrom-Sternberg S."/>
            <person name="Saqib M."/>
            <person name="Schutzer S.E."/>
            <person name="Keim P."/>
            <person name="Nierman W.C."/>
        </authorList>
    </citation>
    <scope>NUCLEOTIDE SEQUENCE [LARGE SCALE GENOMIC DNA]</scope>
    <source>
        <strain>1106a</strain>
    </source>
</reference>
<feature type="chain" id="PRO_1000062463" description="Protein-export protein SecB">
    <location>
        <begin position="1"/>
        <end position="159"/>
    </location>
</feature>
<name>SECB_BURP0</name>
<gene>
    <name evidence="1" type="primary">secB</name>
    <name type="ordered locus">BURPS1106A_0500</name>
</gene>
<accession>A3NR12</accession>
<proteinExistence type="inferred from homology"/>
<organism>
    <name type="scientific">Burkholderia pseudomallei (strain 1106a)</name>
    <dbReference type="NCBI Taxonomy" id="357348"/>
    <lineage>
        <taxon>Bacteria</taxon>
        <taxon>Pseudomonadati</taxon>
        <taxon>Pseudomonadota</taxon>
        <taxon>Betaproteobacteria</taxon>
        <taxon>Burkholderiales</taxon>
        <taxon>Burkholderiaceae</taxon>
        <taxon>Burkholderia</taxon>
        <taxon>pseudomallei group</taxon>
    </lineage>
</organism>
<evidence type="ECO:0000255" key="1">
    <source>
        <dbReference type="HAMAP-Rule" id="MF_00821"/>
    </source>
</evidence>
<sequence>MSDVENQPFFNIQRIYLKDLSLEQPNSPAIFLEQEMPAVEVEVDVKAERLAENVYEIVVAGTVTAKVREKVAFLVEAKQAGIFDIRNIPAEQIDPLCGIACPTILFPYLRSNIADSITRAGFPPIHLAEINFQALYEQRLAEISQQQQQGGAPNGTTLN</sequence>
<dbReference type="EMBL" id="CP000572">
    <property type="protein sequence ID" value="ABN91265.1"/>
    <property type="molecule type" value="Genomic_DNA"/>
</dbReference>
<dbReference type="RefSeq" id="WP_004198004.1">
    <property type="nucleotide sequence ID" value="NC_009076.1"/>
</dbReference>
<dbReference type="SMR" id="A3NR12"/>
<dbReference type="GeneID" id="93058964"/>
<dbReference type="KEGG" id="bpl:BURPS1106A_0500"/>
<dbReference type="HOGENOM" id="CLU_111574_1_0_4"/>
<dbReference type="Proteomes" id="UP000006738">
    <property type="component" value="Chromosome I"/>
</dbReference>
<dbReference type="GO" id="GO:0005737">
    <property type="term" value="C:cytoplasm"/>
    <property type="evidence" value="ECO:0007669"/>
    <property type="project" value="UniProtKB-SubCell"/>
</dbReference>
<dbReference type="GO" id="GO:0051082">
    <property type="term" value="F:unfolded protein binding"/>
    <property type="evidence" value="ECO:0007669"/>
    <property type="project" value="InterPro"/>
</dbReference>
<dbReference type="GO" id="GO:0006457">
    <property type="term" value="P:protein folding"/>
    <property type="evidence" value="ECO:0007669"/>
    <property type="project" value="UniProtKB-UniRule"/>
</dbReference>
<dbReference type="GO" id="GO:0051262">
    <property type="term" value="P:protein tetramerization"/>
    <property type="evidence" value="ECO:0007669"/>
    <property type="project" value="InterPro"/>
</dbReference>
<dbReference type="GO" id="GO:0015031">
    <property type="term" value="P:protein transport"/>
    <property type="evidence" value="ECO:0007669"/>
    <property type="project" value="UniProtKB-UniRule"/>
</dbReference>
<dbReference type="Gene3D" id="3.10.420.10">
    <property type="entry name" value="SecB-like"/>
    <property type="match status" value="1"/>
</dbReference>
<dbReference type="HAMAP" id="MF_00821">
    <property type="entry name" value="SecB"/>
    <property type="match status" value="1"/>
</dbReference>
<dbReference type="InterPro" id="IPR003708">
    <property type="entry name" value="SecB"/>
</dbReference>
<dbReference type="InterPro" id="IPR035958">
    <property type="entry name" value="SecB-like_sf"/>
</dbReference>
<dbReference type="NCBIfam" id="NF004392">
    <property type="entry name" value="PRK05751.1-3"/>
    <property type="match status" value="1"/>
</dbReference>
<dbReference type="NCBIfam" id="NF004394">
    <property type="entry name" value="PRK05751.1-5"/>
    <property type="match status" value="1"/>
</dbReference>
<dbReference type="NCBIfam" id="TIGR00809">
    <property type="entry name" value="secB"/>
    <property type="match status" value="1"/>
</dbReference>
<dbReference type="PANTHER" id="PTHR36918">
    <property type="match status" value="1"/>
</dbReference>
<dbReference type="PANTHER" id="PTHR36918:SF1">
    <property type="entry name" value="PROTEIN-EXPORT PROTEIN SECB"/>
    <property type="match status" value="1"/>
</dbReference>
<dbReference type="Pfam" id="PF02556">
    <property type="entry name" value="SecB"/>
    <property type="match status" value="1"/>
</dbReference>
<dbReference type="PRINTS" id="PR01594">
    <property type="entry name" value="SECBCHAPRONE"/>
</dbReference>
<dbReference type="SUPFAM" id="SSF54611">
    <property type="entry name" value="SecB-like"/>
    <property type="match status" value="1"/>
</dbReference>